<gene>
    <name evidence="1" type="primary">hemE</name>
    <name type="ordered locus">Sputw3181_0537</name>
</gene>
<dbReference type="EC" id="4.1.1.37" evidence="1"/>
<dbReference type="EMBL" id="CP000503">
    <property type="protein sequence ID" value="ABM23388.1"/>
    <property type="molecule type" value="Genomic_DNA"/>
</dbReference>
<dbReference type="RefSeq" id="WP_011787920.1">
    <property type="nucleotide sequence ID" value="NC_008750.1"/>
</dbReference>
<dbReference type="SMR" id="A1RFE3"/>
<dbReference type="GeneID" id="67444982"/>
<dbReference type="KEGG" id="shw:Sputw3181_0537"/>
<dbReference type="HOGENOM" id="CLU_040933_0_0_6"/>
<dbReference type="UniPathway" id="UPA00251">
    <property type="reaction ID" value="UER00321"/>
</dbReference>
<dbReference type="Proteomes" id="UP000002597">
    <property type="component" value="Chromosome"/>
</dbReference>
<dbReference type="GO" id="GO:0005829">
    <property type="term" value="C:cytosol"/>
    <property type="evidence" value="ECO:0007669"/>
    <property type="project" value="TreeGrafter"/>
</dbReference>
<dbReference type="GO" id="GO:0004853">
    <property type="term" value="F:uroporphyrinogen decarboxylase activity"/>
    <property type="evidence" value="ECO:0007669"/>
    <property type="project" value="UniProtKB-UniRule"/>
</dbReference>
<dbReference type="GO" id="GO:0019353">
    <property type="term" value="P:protoporphyrinogen IX biosynthetic process from glutamate"/>
    <property type="evidence" value="ECO:0007669"/>
    <property type="project" value="TreeGrafter"/>
</dbReference>
<dbReference type="CDD" id="cd00717">
    <property type="entry name" value="URO-D"/>
    <property type="match status" value="1"/>
</dbReference>
<dbReference type="FunFam" id="3.20.20.210:FF:000001">
    <property type="entry name" value="Uroporphyrinogen decarboxylase"/>
    <property type="match status" value="1"/>
</dbReference>
<dbReference type="Gene3D" id="3.20.20.210">
    <property type="match status" value="1"/>
</dbReference>
<dbReference type="HAMAP" id="MF_00218">
    <property type="entry name" value="URO_D"/>
    <property type="match status" value="1"/>
</dbReference>
<dbReference type="InterPro" id="IPR038071">
    <property type="entry name" value="UROD/MetE-like_sf"/>
</dbReference>
<dbReference type="InterPro" id="IPR006361">
    <property type="entry name" value="Uroporphyrinogen_deCO2ase_HemE"/>
</dbReference>
<dbReference type="InterPro" id="IPR000257">
    <property type="entry name" value="Uroporphyrinogen_deCOase"/>
</dbReference>
<dbReference type="NCBIfam" id="TIGR01464">
    <property type="entry name" value="hemE"/>
    <property type="match status" value="1"/>
</dbReference>
<dbReference type="PANTHER" id="PTHR21091">
    <property type="entry name" value="METHYLTETRAHYDROFOLATE:HOMOCYSTEINE METHYLTRANSFERASE RELATED"/>
    <property type="match status" value="1"/>
</dbReference>
<dbReference type="PANTHER" id="PTHR21091:SF169">
    <property type="entry name" value="UROPORPHYRINOGEN DECARBOXYLASE"/>
    <property type="match status" value="1"/>
</dbReference>
<dbReference type="Pfam" id="PF01208">
    <property type="entry name" value="URO-D"/>
    <property type="match status" value="1"/>
</dbReference>
<dbReference type="SUPFAM" id="SSF51726">
    <property type="entry name" value="UROD/MetE-like"/>
    <property type="match status" value="1"/>
</dbReference>
<dbReference type="PROSITE" id="PS00906">
    <property type="entry name" value="UROD_1"/>
    <property type="match status" value="1"/>
</dbReference>
<dbReference type="PROSITE" id="PS00907">
    <property type="entry name" value="UROD_2"/>
    <property type="match status" value="1"/>
</dbReference>
<organism>
    <name type="scientific">Shewanella sp. (strain W3-18-1)</name>
    <dbReference type="NCBI Taxonomy" id="351745"/>
    <lineage>
        <taxon>Bacteria</taxon>
        <taxon>Pseudomonadati</taxon>
        <taxon>Pseudomonadota</taxon>
        <taxon>Gammaproteobacteria</taxon>
        <taxon>Alteromonadales</taxon>
        <taxon>Shewanellaceae</taxon>
        <taxon>Shewanella</taxon>
    </lineage>
</organism>
<keyword id="KW-0963">Cytoplasm</keyword>
<keyword id="KW-0210">Decarboxylase</keyword>
<keyword id="KW-0456">Lyase</keyword>
<keyword id="KW-0627">Porphyrin biosynthesis</keyword>
<accession>A1RFE3</accession>
<protein>
    <recommendedName>
        <fullName evidence="1">Uroporphyrinogen decarboxylase</fullName>
        <shortName evidence="1">UPD</shortName>
        <shortName evidence="1">URO-D</shortName>
        <ecNumber evidence="1">4.1.1.37</ecNumber>
    </recommendedName>
</protein>
<proteinExistence type="inferred from homology"/>
<sequence length="354" mass="39221">MAELKNDRYLRALLKQPVDMTPVWMMRQAGRYLPEYKATRAQAGDFMSLCKNHELACEVTLQPLRRYELDAAILFSDILTVPDAMGLGLYFEAGEGPRFERPTDTIDAIKKLSIPDPEDELGYVMKAVSTIRRELNGAVPLIGFSGSPWTLATYMVEGGSSKTFEKIKKMAYAEPAALHMLLDKLADSVILYLNAQVANGAQSLMIFDSWGGALSHTAYREFSLRYMQKIVDGLTRFADGRQVPVTLFTKGGGLWLEAMAETGCDALGLDWTVDIADARRRVGHKVALQGNMDPSMLYAPIPRIEEEVSQILAGYGEGTGHVFNLGHGIHQHVDPEHAGAFIKAVHAQSKQYHK</sequence>
<feature type="chain" id="PRO_1000023976" description="Uroporphyrinogen decarboxylase">
    <location>
        <begin position="1"/>
        <end position="354"/>
    </location>
</feature>
<feature type="binding site" evidence="1">
    <location>
        <begin position="27"/>
        <end position="31"/>
    </location>
    <ligand>
        <name>substrate</name>
    </ligand>
</feature>
<feature type="binding site" evidence="1">
    <location>
        <position position="77"/>
    </location>
    <ligand>
        <name>substrate</name>
    </ligand>
</feature>
<feature type="binding site" evidence="1">
    <location>
        <position position="154"/>
    </location>
    <ligand>
        <name>substrate</name>
    </ligand>
</feature>
<feature type="binding site" evidence="1">
    <location>
        <position position="209"/>
    </location>
    <ligand>
        <name>substrate</name>
    </ligand>
</feature>
<feature type="binding site" evidence="1">
    <location>
        <position position="327"/>
    </location>
    <ligand>
        <name>substrate</name>
    </ligand>
</feature>
<feature type="site" description="Transition state stabilizer" evidence="1">
    <location>
        <position position="77"/>
    </location>
</feature>
<name>DCUP_SHESW</name>
<reference key="1">
    <citation type="submission" date="2006-12" db="EMBL/GenBank/DDBJ databases">
        <title>Complete sequence of Shewanella sp. W3-18-1.</title>
        <authorList>
            <consortium name="US DOE Joint Genome Institute"/>
            <person name="Copeland A."/>
            <person name="Lucas S."/>
            <person name="Lapidus A."/>
            <person name="Barry K."/>
            <person name="Detter J.C."/>
            <person name="Glavina del Rio T."/>
            <person name="Hammon N."/>
            <person name="Israni S."/>
            <person name="Dalin E."/>
            <person name="Tice H."/>
            <person name="Pitluck S."/>
            <person name="Chain P."/>
            <person name="Malfatti S."/>
            <person name="Shin M."/>
            <person name="Vergez L."/>
            <person name="Schmutz J."/>
            <person name="Larimer F."/>
            <person name="Land M."/>
            <person name="Hauser L."/>
            <person name="Kyrpides N."/>
            <person name="Lykidis A."/>
            <person name="Tiedje J."/>
            <person name="Richardson P."/>
        </authorList>
    </citation>
    <scope>NUCLEOTIDE SEQUENCE [LARGE SCALE GENOMIC DNA]</scope>
    <source>
        <strain>W3-18-1</strain>
    </source>
</reference>
<comment type="function">
    <text evidence="1">Catalyzes the decarboxylation of four acetate groups of uroporphyrinogen-III to yield coproporphyrinogen-III.</text>
</comment>
<comment type="catalytic activity">
    <reaction evidence="1">
        <text>uroporphyrinogen III + 4 H(+) = coproporphyrinogen III + 4 CO2</text>
        <dbReference type="Rhea" id="RHEA:19865"/>
        <dbReference type="ChEBI" id="CHEBI:15378"/>
        <dbReference type="ChEBI" id="CHEBI:16526"/>
        <dbReference type="ChEBI" id="CHEBI:57308"/>
        <dbReference type="ChEBI" id="CHEBI:57309"/>
        <dbReference type="EC" id="4.1.1.37"/>
    </reaction>
</comment>
<comment type="pathway">
    <text evidence="1">Porphyrin-containing compound metabolism; protoporphyrin-IX biosynthesis; coproporphyrinogen-III from 5-aminolevulinate: step 4/4.</text>
</comment>
<comment type="subunit">
    <text evidence="1">Homodimer.</text>
</comment>
<comment type="subcellular location">
    <subcellularLocation>
        <location evidence="1">Cytoplasm</location>
    </subcellularLocation>
</comment>
<comment type="similarity">
    <text evidence="1">Belongs to the uroporphyrinogen decarboxylase family.</text>
</comment>
<evidence type="ECO:0000255" key="1">
    <source>
        <dbReference type="HAMAP-Rule" id="MF_00218"/>
    </source>
</evidence>